<protein>
    <recommendedName>
        <fullName evidence="1">5'-deoxynucleotidase ESA_00928</fullName>
        <ecNumber evidence="1">3.1.3.89</ecNumber>
    </recommendedName>
    <alternativeName>
        <fullName evidence="1">5'-deoxyribonucleotidase</fullName>
    </alternativeName>
    <alternativeName>
        <fullName evidence="1">Nucleoside 5'-monophosphate phosphohydrolase</fullName>
    </alternativeName>
</protein>
<proteinExistence type="inferred from homology"/>
<gene>
    <name type="ordered locus">ESA_00928</name>
</gene>
<comment type="function">
    <text evidence="1">Catalyzes the strictly specific dephosphorylation of 2'-deoxyribonucleoside 5'-monophosphates.</text>
</comment>
<comment type="catalytic activity">
    <reaction evidence="1">
        <text>a 2'-deoxyribonucleoside 5'-phosphate + H2O = a 2'-deoxyribonucleoside + phosphate</text>
        <dbReference type="Rhea" id="RHEA:36167"/>
        <dbReference type="ChEBI" id="CHEBI:15377"/>
        <dbReference type="ChEBI" id="CHEBI:18274"/>
        <dbReference type="ChEBI" id="CHEBI:43474"/>
        <dbReference type="ChEBI" id="CHEBI:65317"/>
        <dbReference type="EC" id="3.1.3.89"/>
    </reaction>
</comment>
<comment type="cofactor">
    <cofactor evidence="1">
        <name>a divalent metal cation</name>
        <dbReference type="ChEBI" id="CHEBI:60240"/>
    </cofactor>
</comment>
<comment type="subunit">
    <text evidence="1">Homodimer.</text>
</comment>
<comment type="subcellular location">
    <subcellularLocation>
        <location evidence="1">Cytoplasm</location>
    </subcellularLocation>
</comment>
<comment type="similarity">
    <text evidence="1">Belongs to the 5DNU family.</text>
</comment>
<evidence type="ECO:0000255" key="1">
    <source>
        <dbReference type="HAMAP-Rule" id="MF_01100"/>
    </source>
</evidence>
<evidence type="ECO:0000255" key="2">
    <source>
        <dbReference type="PROSITE-ProRule" id="PRU01175"/>
    </source>
</evidence>
<feature type="chain" id="PRO_1000064954" description="5'-deoxynucleotidase ESA_00928">
    <location>
        <begin position="1"/>
        <end position="199"/>
    </location>
</feature>
<feature type="domain" description="HD" evidence="2">
    <location>
        <begin position="30"/>
        <end position="142"/>
    </location>
</feature>
<feature type="binding site" evidence="1">
    <location>
        <begin position="18"/>
        <end position="19"/>
    </location>
    <ligand>
        <name>substrate</name>
    </ligand>
</feature>
<feature type="binding site" evidence="1">
    <location>
        <position position="33"/>
    </location>
    <ligand>
        <name>a divalent metal cation</name>
        <dbReference type="ChEBI" id="CHEBI:60240"/>
    </ligand>
</feature>
<feature type="binding site" evidence="1">
    <location>
        <position position="33"/>
    </location>
    <ligand>
        <name>substrate</name>
    </ligand>
</feature>
<feature type="binding site" evidence="1">
    <location>
        <position position="68"/>
    </location>
    <ligand>
        <name>a divalent metal cation</name>
        <dbReference type="ChEBI" id="CHEBI:60240"/>
    </ligand>
</feature>
<feature type="binding site" evidence="1">
    <location>
        <position position="69"/>
    </location>
    <ligand>
        <name>a divalent metal cation</name>
        <dbReference type="ChEBI" id="CHEBI:60240"/>
    </ligand>
</feature>
<feature type="binding site" evidence="1">
    <location>
        <position position="69"/>
    </location>
    <ligand>
        <name>substrate</name>
    </ligand>
</feature>
<feature type="binding site" evidence="1">
    <location>
        <begin position="77"/>
        <end position="80"/>
    </location>
    <ligand>
        <name>substrate</name>
    </ligand>
</feature>
<feature type="binding site" evidence="1">
    <location>
        <position position="137"/>
    </location>
    <ligand>
        <name>a divalent metal cation</name>
        <dbReference type="ChEBI" id="CHEBI:60240"/>
    </ligand>
</feature>
<feature type="binding site" evidence="1">
    <location>
        <position position="137"/>
    </location>
    <ligand>
        <name>substrate</name>
    </ligand>
</feature>
<feature type="site" description="Appears to be important in orienting the phosphate for catalysis" evidence="1">
    <location>
        <position position="18"/>
    </location>
</feature>
<accession>A7MH33</accession>
<name>5DNU_CROS8</name>
<keyword id="KW-0963">Cytoplasm</keyword>
<keyword id="KW-0378">Hydrolase</keyword>
<keyword id="KW-0479">Metal-binding</keyword>
<keyword id="KW-0547">Nucleotide-binding</keyword>
<keyword id="KW-1185">Reference proteome</keyword>
<reference key="1">
    <citation type="journal article" date="2010" name="PLoS ONE">
        <title>Genome sequence of Cronobacter sakazakii BAA-894 and comparative genomic hybridization analysis with other Cronobacter species.</title>
        <authorList>
            <person name="Kucerova E."/>
            <person name="Clifton S.W."/>
            <person name="Xia X.Q."/>
            <person name="Long F."/>
            <person name="Porwollik S."/>
            <person name="Fulton L."/>
            <person name="Fronick C."/>
            <person name="Minx P."/>
            <person name="Kyung K."/>
            <person name="Warren W."/>
            <person name="Fulton R."/>
            <person name="Feng D."/>
            <person name="Wollam A."/>
            <person name="Shah N."/>
            <person name="Bhonagiri V."/>
            <person name="Nash W.E."/>
            <person name="Hallsworth-Pepin K."/>
            <person name="Wilson R.K."/>
            <person name="McClelland M."/>
            <person name="Forsythe S.J."/>
        </authorList>
    </citation>
    <scope>NUCLEOTIDE SEQUENCE [LARGE SCALE GENOMIC DNA]</scope>
    <source>
        <strain>ATCC BAA-894</strain>
    </source>
</reference>
<dbReference type="EC" id="3.1.3.89" evidence="1"/>
<dbReference type="EMBL" id="CP000783">
    <property type="protein sequence ID" value="ABU76198.1"/>
    <property type="molecule type" value="Genomic_DNA"/>
</dbReference>
<dbReference type="SMR" id="A7MH33"/>
<dbReference type="KEGG" id="esa:ESA_00928"/>
<dbReference type="HOGENOM" id="CLU_084784_0_0_6"/>
<dbReference type="Proteomes" id="UP000000260">
    <property type="component" value="Chromosome"/>
</dbReference>
<dbReference type="GO" id="GO:0005737">
    <property type="term" value="C:cytoplasm"/>
    <property type="evidence" value="ECO:0007669"/>
    <property type="project" value="UniProtKB-SubCell"/>
</dbReference>
<dbReference type="GO" id="GO:0002953">
    <property type="term" value="F:5'-deoxynucleotidase activity"/>
    <property type="evidence" value="ECO:0007669"/>
    <property type="project" value="UniProtKB-EC"/>
</dbReference>
<dbReference type="GO" id="GO:0046872">
    <property type="term" value="F:metal ion binding"/>
    <property type="evidence" value="ECO:0007669"/>
    <property type="project" value="UniProtKB-KW"/>
</dbReference>
<dbReference type="GO" id="GO:0000166">
    <property type="term" value="F:nucleotide binding"/>
    <property type="evidence" value="ECO:0007669"/>
    <property type="project" value="UniProtKB-KW"/>
</dbReference>
<dbReference type="CDD" id="cd00077">
    <property type="entry name" value="HDc"/>
    <property type="match status" value="1"/>
</dbReference>
<dbReference type="FunFam" id="1.10.3210.10:FF:000002">
    <property type="entry name" value="Nucleotidase YfbR"/>
    <property type="match status" value="1"/>
</dbReference>
<dbReference type="Gene3D" id="1.10.3210.10">
    <property type="entry name" value="Hypothetical protein af1432"/>
    <property type="match status" value="1"/>
</dbReference>
<dbReference type="HAMAP" id="MF_01100">
    <property type="entry name" value="5DNU"/>
    <property type="match status" value="1"/>
</dbReference>
<dbReference type="InterPro" id="IPR003607">
    <property type="entry name" value="HD/PDEase_dom"/>
</dbReference>
<dbReference type="InterPro" id="IPR006674">
    <property type="entry name" value="HD_domain"/>
</dbReference>
<dbReference type="InterPro" id="IPR022971">
    <property type="entry name" value="YfbR"/>
</dbReference>
<dbReference type="InterPro" id="IPR039356">
    <property type="entry name" value="YfbR/HDDC2"/>
</dbReference>
<dbReference type="NCBIfam" id="NF003009">
    <property type="entry name" value="PRK03826.1"/>
    <property type="match status" value="1"/>
</dbReference>
<dbReference type="PANTHER" id="PTHR11845">
    <property type="entry name" value="5'-DEOXYNUCLEOTIDASE HDDC2"/>
    <property type="match status" value="1"/>
</dbReference>
<dbReference type="PANTHER" id="PTHR11845:SF13">
    <property type="entry name" value="5'-DEOXYNUCLEOTIDASE HDDC2"/>
    <property type="match status" value="1"/>
</dbReference>
<dbReference type="Pfam" id="PF12917">
    <property type="entry name" value="YfbR-like"/>
    <property type="match status" value="1"/>
</dbReference>
<dbReference type="SMART" id="SM00471">
    <property type="entry name" value="HDc"/>
    <property type="match status" value="1"/>
</dbReference>
<dbReference type="SUPFAM" id="SSF109604">
    <property type="entry name" value="HD-domain/PDEase-like"/>
    <property type="match status" value="1"/>
</dbReference>
<dbReference type="PROSITE" id="PS51831">
    <property type="entry name" value="HD"/>
    <property type="match status" value="1"/>
</dbReference>
<sequence length="199" mass="22816">MSQSHFFAYLSRLKLINRWPLMRNVRTENVSEHSLQVAMVAHALAVIKNRKFQGNVNPERIALLAMYHDASEVLTGDLPTPVKYFNSQIAHEYKAIEKIAQQKLIAMVPEELQDIFAPLLDEHHYTEDEKSLVKQADALCAYLKCLEELSAGNNEFLLAKSRLEKTLAQRHSAEMDYFMQVFVPSFHLSLDEISQDSPL</sequence>
<organism>
    <name type="scientific">Cronobacter sakazakii (strain ATCC BAA-894)</name>
    <name type="common">Enterobacter sakazakii</name>
    <dbReference type="NCBI Taxonomy" id="290339"/>
    <lineage>
        <taxon>Bacteria</taxon>
        <taxon>Pseudomonadati</taxon>
        <taxon>Pseudomonadota</taxon>
        <taxon>Gammaproteobacteria</taxon>
        <taxon>Enterobacterales</taxon>
        <taxon>Enterobacteriaceae</taxon>
        <taxon>Cronobacter</taxon>
    </lineage>
</organism>